<gene>
    <name type="primary">Pid1</name>
    <name type="synonym">Pcli1</name>
</gene>
<organism>
    <name type="scientific">Mus musculus</name>
    <name type="common">Mouse</name>
    <dbReference type="NCBI Taxonomy" id="10090"/>
    <lineage>
        <taxon>Eukaryota</taxon>
        <taxon>Metazoa</taxon>
        <taxon>Chordata</taxon>
        <taxon>Craniata</taxon>
        <taxon>Vertebrata</taxon>
        <taxon>Euteleostomi</taxon>
        <taxon>Mammalia</taxon>
        <taxon>Eutheria</taxon>
        <taxon>Euarchontoglires</taxon>
        <taxon>Glires</taxon>
        <taxon>Rodentia</taxon>
        <taxon>Myomorpha</taxon>
        <taxon>Muroidea</taxon>
        <taxon>Muridae</taxon>
        <taxon>Murinae</taxon>
        <taxon>Mus</taxon>
        <taxon>Mus</taxon>
    </lineage>
</organism>
<reference key="1">
    <citation type="journal article" date="2005" name="Science">
        <title>The transcriptional landscape of the mammalian genome.</title>
        <authorList>
            <person name="Carninci P."/>
            <person name="Kasukawa T."/>
            <person name="Katayama S."/>
            <person name="Gough J."/>
            <person name="Frith M.C."/>
            <person name="Maeda N."/>
            <person name="Oyama R."/>
            <person name="Ravasi T."/>
            <person name="Lenhard B."/>
            <person name="Wells C."/>
            <person name="Kodzius R."/>
            <person name="Shimokawa K."/>
            <person name="Bajic V.B."/>
            <person name="Brenner S.E."/>
            <person name="Batalov S."/>
            <person name="Forrest A.R."/>
            <person name="Zavolan M."/>
            <person name="Davis M.J."/>
            <person name="Wilming L.G."/>
            <person name="Aidinis V."/>
            <person name="Allen J.E."/>
            <person name="Ambesi-Impiombato A."/>
            <person name="Apweiler R."/>
            <person name="Aturaliya R.N."/>
            <person name="Bailey T.L."/>
            <person name="Bansal M."/>
            <person name="Baxter L."/>
            <person name="Beisel K.W."/>
            <person name="Bersano T."/>
            <person name="Bono H."/>
            <person name="Chalk A.M."/>
            <person name="Chiu K.P."/>
            <person name="Choudhary V."/>
            <person name="Christoffels A."/>
            <person name="Clutterbuck D.R."/>
            <person name="Crowe M.L."/>
            <person name="Dalla E."/>
            <person name="Dalrymple B.P."/>
            <person name="de Bono B."/>
            <person name="Della Gatta G."/>
            <person name="di Bernardo D."/>
            <person name="Down T."/>
            <person name="Engstrom P."/>
            <person name="Fagiolini M."/>
            <person name="Faulkner G."/>
            <person name="Fletcher C.F."/>
            <person name="Fukushima T."/>
            <person name="Furuno M."/>
            <person name="Futaki S."/>
            <person name="Gariboldi M."/>
            <person name="Georgii-Hemming P."/>
            <person name="Gingeras T.R."/>
            <person name="Gojobori T."/>
            <person name="Green R.E."/>
            <person name="Gustincich S."/>
            <person name="Harbers M."/>
            <person name="Hayashi Y."/>
            <person name="Hensch T.K."/>
            <person name="Hirokawa N."/>
            <person name="Hill D."/>
            <person name="Huminiecki L."/>
            <person name="Iacono M."/>
            <person name="Ikeo K."/>
            <person name="Iwama A."/>
            <person name="Ishikawa T."/>
            <person name="Jakt M."/>
            <person name="Kanapin A."/>
            <person name="Katoh M."/>
            <person name="Kawasawa Y."/>
            <person name="Kelso J."/>
            <person name="Kitamura H."/>
            <person name="Kitano H."/>
            <person name="Kollias G."/>
            <person name="Krishnan S.P."/>
            <person name="Kruger A."/>
            <person name="Kummerfeld S.K."/>
            <person name="Kurochkin I.V."/>
            <person name="Lareau L.F."/>
            <person name="Lazarevic D."/>
            <person name="Lipovich L."/>
            <person name="Liu J."/>
            <person name="Liuni S."/>
            <person name="McWilliam S."/>
            <person name="Madan Babu M."/>
            <person name="Madera M."/>
            <person name="Marchionni L."/>
            <person name="Matsuda H."/>
            <person name="Matsuzawa S."/>
            <person name="Miki H."/>
            <person name="Mignone F."/>
            <person name="Miyake S."/>
            <person name="Morris K."/>
            <person name="Mottagui-Tabar S."/>
            <person name="Mulder N."/>
            <person name="Nakano N."/>
            <person name="Nakauchi H."/>
            <person name="Ng P."/>
            <person name="Nilsson R."/>
            <person name="Nishiguchi S."/>
            <person name="Nishikawa S."/>
            <person name="Nori F."/>
            <person name="Ohara O."/>
            <person name="Okazaki Y."/>
            <person name="Orlando V."/>
            <person name="Pang K.C."/>
            <person name="Pavan W.J."/>
            <person name="Pavesi G."/>
            <person name="Pesole G."/>
            <person name="Petrovsky N."/>
            <person name="Piazza S."/>
            <person name="Reed J."/>
            <person name="Reid J.F."/>
            <person name="Ring B.Z."/>
            <person name="Ringwald M."/>
            <person name="Rost B."/>
            <person name="Ruan Y."/>
            <person name="Salzberg S.L."/>
            <person name="Sandelin A."/>
            <person name="Schneider C."/>
            <person name="Schoenbach C."/>
            <person name="Sekiguchi K."/>
            <person name="Semple C.A."/>
            <person name="Seno S."/>
            <person name="Sessa L."/>
            <person name="Sheng Y."/>
            <person name="Shibata Y."/>
            <person name="Shimada H."/>
            <person name="Shimada K."/>
            <person name="Silva D."/>
            <person name="Sinclair B."/>
            <person name="Sperling S."/>
            <person name="Stupka E."/>
            <person name="Sugiura K."/>
            <person name="Sultana R."/>
            <person name="Takenaka Y."/>
            <person name="Taki K."/>
            <person name="Tammoja K."/>
            <person name="Tan S.L."/>
            <person name="Tang S."/>
            <person name="Taylor M.S."/>
            <person name="Tegner J."/>
            <person name="Teichmann S.A."/>
            <person name="Ueda H.R."/>
            <person name="van Nimwegen E."/>
            <person name="Verardo R."/>
            <person name="Wei C.L."/>
            <person name="Yagi K."/>
            <person name="Yamanishi H."/>
            <person name="Zabarovsky E."/>
            <person name="Zhu S."/>
            <person name="Zimmer A."/>
            <person name="Hide W."/>
            <person name="Bult C."/>
            <person name="Grimmond S.M."/>
            <person name="Teasdale R.D."/>
            <person name="Liu E.T."/>
            <person name="Brusic V."/>
            <person name="Quackenbush J."/>
            <person name="Wahlestedt C."/>
            <person name="Mattick J.S."/>
            <person name="Hume D.A."/>
            <person name="Kai C."/>
            <person name="Sasaki D."/>
            <person name="Tomaru Y."/>
            <person name="Fukuda S."/>
            <person name="Kanamori-Katayama M."/>
            <person name="Suzuki M."/>
            <person name="Aoki J."/>
            <person name="Arakawa T."/>
            <person name="Iida J."/>
            <person name="Imamura K."/>
            <person name="Itoh M."/>
            <person name="Kato T."/>
            <person name="Kawaji H."/>
            <person name="Kawagashira N."/>
            <person name="Kawashima T."/>
            <person name="Kojima M."/>
            <person name="Kondo S."/>
            <person name="Konno H."/>
            <person name="Nakano K."/>
            <person name="Ninomiya N."/>
            <person name="Nishio T."/>
            <person name="Okada M."/>
            <person name="Plessy C."/>
            <person name="Shibata K."/>
            <person name="Shiraki T."/>
            <person name="Suzuki S."/>
            <person name="Tagami M."/>
            <person name="Waki K."/>
            <person name="Watahiki A."/>
            <person name="Okamura-Oho Y."/>
            <person name="Suzuki H."/>
            <person name="Kawai J."/>
            <person name="Hayashizaki Y."/>
        </authorList>
    </citation>
    <scope>NUCLEOTIDE SEQUENCE [LARGE SCALE MRNA] (ISOFORMS 1 AND 2)</scope>
    <source>
        <strain>C57BL/6J</strain>
        <tissue>Bone marrow</tissue>
        <tissue>Egg</tissue>
    </source>
</reference>
<reference key="2">
    <citation type="journal article" date="2004" name="Genome Res.">
        <title>The status, quality, and expansion of the NIH full-length cDNA project: the Mammalian Gene Collection (MGC).</title>
        <authorList>
            <consortium name="The MGC Project Team"/>
        </authorList>
    </citation>
    <scope>NUCLEOTIDE SEQUENCE [LARGE SCALE MRNA] (ISOFORM 1)</scope>
    <scope>NUCLEOTIDE SEQUENCE [LARGE SCALE MRNA] OF 37-217 (ISOFORMS 1/2)</scope>
    <source>
        <strain>C57BL/6J</strain>
        <tissue>Brain</tissue>
        <tissue>Embryo</tissue>
    </source>
</reference>
<reference key="3">
    <citation type="journal article" date="2007" name="Proc. Natl. Acad. Sci. U.S.A.">
        <title>Large-scale phosphorylation analysis of mouse liver.</title>
        <authorList>
            <person name="Villen J."/>
            <person name="Beausoleil S.A."/>
            <person name="Gerber S.A."/>
            <person name="Gygi S.P."/>
        </authorList>
    </citation>
    <scope>PHOSPHORYLATION [LARGE SCALE ANALYSIS] AT SER-203 AND SER-214</scope>
    <scope>IDENTIFICATION BY MASS SPECTROMETRY [LARGE SCALE ANALYSIS]</scope>
    <source>
        <tissue>Liver</tissue>
    </source>
</reference>
<reference key="4">
    <citation type="journal article" date="2009" name="Immunity">
        <title>The phagosomal proteome in interferon-gamma-activated macrophages.</title>
        <authorList>
            <person name="Trost M."/>
            <person name="English L."/>
            <person name="Lemieux S."/>
            <person name="Courcelles M."/>
            <person name="Desjardins M."/>
            <person name="Thibault P."/>
        </authorList>
    </citation>
    <scope>PHOSPHORYLATION [LARGE SCALE ANALYSIS] AT SER-202; SER-203 AND SER-214</scope>
    <scope>IDENTIFICATION BY MASS SPECTROMETRY [LARGE SCALE ANALYSIS]</scope>
</reference>
<reference key="5">
    <citation type="journal article" date="2010" name="Cell">
        <title>A tissue-specific atlas of mouse protein phosphorylation and expression.</title>
        <authorList>
            <person name="Huttlin E.L."/>
            <person name="Jedrychowski M.P."/>
            <person name="Elias J.E."/>
            <person name="Goswami T."/>
            <person name="Rad R."/>
            <person name="Beausoleil S.A."/>
            <person name="Villen J."/>
            <person name="Haas W."/>
            <person name="Sowa M.E."/>
            <person name="Gygi S.P."/>
        </authorList>
    </citation>
    <scope>IDENTIFICATION BY MASS SPECTROMETRY [LARGE SCALE ANALYSIS]</scope>
    <source>
        <tissue>Brain</tissue>
        <tissue>Kidney</tissue>
        <tissue>Liver</tissue>
        <tissue>Testis</tissue>
    </source>
</reference>
<proteinExistence type="evidence at protein level"/>
<comment type="function">
    <text evidence="1">Increases proliferation of preadipocytes without affecting adipocytic differentiation.</text>
</comment>
<comment type="subunit">
    <text evidence="1">Found in a complex with PID1/PCLI1, LRP1 and CUBNI. Interacts with LRP1 and CUBN.</text>
</comment>
<comment type="subcellular location">
    <subcellularLocation>
        <location evidence="1">Cytoplasm</location>
    </subcellularLocation>
</comment>
<comment type="alternative products">
    <event type="alternative splicing"/>
    <isoform>
        <id>Q3UBG2-1</id>
        <name>1</name>
        <sequence type="displayed"/>
    </isoform>
    <isoform>
        <id>Q3UBG2-2</id>
        <name>2</name>
        <sequence type="described" ref="VSP_022913"/>
    </isoform>
</comment>
<comment type="sequence caution" evidence="5">
    <conflict type="erroneous initiation">
        <sequence resource="EMBL-CDS" id="AAH54112"/>
    </conflict>
</comment>
<comment type="sequence caution" evidence="5">
    <conflict type="erroneous initiation">
        <sequence resource="EMBL-CDS" id="AAH80290"/>
    </conflict>
</comment>
<comment type="sequence caution" evidence="5">
    <conflict type="erroneous initiation">
        <sequence resource="EMBL-CDS" id="BAE30002"/>
    </conflict>
</comment>
<comment type="sequence caution" evidence="5">
    <conflict type="erroneous initiation">
        <sequence resource="EMBL-CDS" id="BAE30254"/>
    </conflict>
</comment>
<accession>Q3UBG2</accession>
<accession>Q3UAR0</accession>
<accession>Q68EE9</accession>
<accession>Q7TPS1</accession>
<dbReference type="EMBL" id="AK150971">
    <property type="protein sequence ID" value="BAE30002.1"/>
    <property type="status" value="ALT_INIT"/>
    <property type="molecule type" value="mRNA"/>
</dbReference>
<dbReference type="EMBL" id="AK151267">
    <property type="protein sequence ID" value="BAE30254.1"/>
    <property type="status" value="ALT_INIT"/>
    <property type="molecule type" value="mRNA"/>
</dbReference>
<dbReference type="EMBL" id="AK162081">
    <property type="protein sequence ID" value="BAE36714.1"/>
    <property type="molecule type" value="mRNA"/>
</dbReference>
<dbReference type="EMBL" id="BC054112">
    <property type="protein sequence ID" value="AAH54112.1"/>
    <property type="status" value="ALT_INIT"/>
    <property type="molecule type" value="mRNA"/>
</dbReference>
<dbReference type="EMBL" id="BC080290">
    <property type="protein sequence ID" value="AAH80290.1"/>
    <property type="status" value="ALT_INIT"/>
    <property type="molecule type" value="mRNA"/>
</dbReference>
<dbReference type="CCDS" id="CCDS15104.2">
    <molecule id="Q3UBG2-1"/>
</dbReference>
<dbReference type="RefSeq" id="NP_001003948.2">
    <molecule id="Q3UBG2-1"/>
    <property type="nucleotide sequence ID" value="NM_001003948.2"/>
</dbReference>
<dbReference type="SMR" id="Q3UBG2"/>
<dbReference type="BioGRID" id="221073">
    <property type="interactions" value="4"/>
</dbReference>
<dbReference type="FunCoup" id="Q3UBG2">
    <property type="interactions" value="558"/>
</dbReference>
<dbReference type="STRING" id="10090.ENSMUSP00000127716"/>
<dbReference type="iPTMnet" id="Q3UBG2"/>
<dbReference type="PhosphoSitePlus" id="Q3UBG2"/>
<dbReference type="PaxDb" id="10090-ENSMUSP00000127716"/>
<dbReference type="PeptideAtlas" id="Q3UBG2"/>
<dbReference type="ProteomicsDB" id="288073">
    <molecule id="Q3UBG2-1"/>
</dbReference>
<dbReference type="ProteomicsDB" id="288074">
    <molecule id="Q3UBG2-2"/>
</dbReference>
<dbReference type="Antibodypedia" id="34394">
    <property type="antibodies" value="113 antibodies from 17 providers"/>
</dbReference>
<dbReference type="Ensembl" id="ENSMUST00000168574.9">
    <molecule id="Q3UBG2-1"/>
    <property type="protein sequence ID" value="ENSMUSP00000127716.3"/>
    <property type="gene ID" value="ENSMUSG00000045658.17"/>
</dbReference>
<dbReference type="Ensembl" id="ENSMUST00000176559.8">
    <molecule id="Q3UBG2-2"/>
    <property type="protein sequence ID" value="ENSMUSP00000135164.2"/>
    <property type="gene ID" value="ENSMUSG00000045658.17"/>
</dbReference>
<dbReference type="GeneID" id="98496"/>
<dbReference type="KEGG" id="mmu:98496"/>
<dbReference type="UCSC" id="uc007bst.2">
    <molecule id="Q3UBG2-1"/>
    <property type="organism name" value="mouse"/>
</dbReference>
<dbReference type="AGR" id="MGI:2138391"/>
<dbReference type="CTD" id="55022"/>
<dbReference type="MGI" id="MGI:2138391">
    <property type="gene designation" value="Pid1"/>
</dbReference>
<dbReference type="VEuPathDB" id="HostDB:ENSMUSG00000045658"/>
<dbReference type="eggNOG" id="KOG4448">
    <property type="taxonomic scope" value="Eukaryota"/>
</dbReference>
<dbReference type="GeneTree" id="ENSGT00510000048154"/>
<dbReference type="HOGENOM" id="CLU_088811_0_0_1"/>
<dbReference type="InParanoid" id="Q3UBG2"/>
<dbReference type="OMA" id="SHAGYKV"/>
<dbReference type="OrthoDB" id="5980998at2759"/>
<dbReference type="PhylomeDB" id="Q3UBG2"/>
<dbReference type="BioGRID-ORCS" id="98496">
    <property type="hits" value="4 hits in 75 CRISPR screens"/>
</dbReference>
<dbReference type="ChiTaRS" id="Pid1">
    <property type="organism name" value="mouse"/>
</dbReference>
<dbReference type="PRO" id="PR:Q3UBG2"/>
<dbReference type="Proteomes" id="UP000000589">
    <property type="component" value="Chromosome 1"/>
</dbReference>
<dbReference type="RNAct" id="Q3UBG2">
    <property type="molecule type" value="protein"/>
</dbReference>
<dbReference type="Bgee" id="ENSMUSG00000045658">
    <property type="expression patterns" value="Expressed in stroma of bone marrow and 234 other cell types or tissues"/>
</dbReference>
<dbReference type="ExpressionAtlas" id="Q3UBG2">
    <property type="expression patterns" value="baseline and differential"/>
</dbReference>
<dbReference type="GO" id="GO:0005737">
    <property type="term" value="C:cytoplasm"/>
    <property type="evidence" value="ECO:0000314"/>
    <property type="project" value="BHF-UCL"/>
</dbReference>
<dbReference type="GO" id="GO:0071345">
    <property type="term" value="P:cellular response to cytokine stimulus"/>
    <property type="evidence" value="ECO:0000314"/>
    <property type="project" value="BHF-UCL"/>
</dbReference>
<dbReference type="GO" id="GO:0071398">
    <property type="term" value="P:cellular response to fatty acid"/>
    <property type="evidence" value="ECO:0000314"/>
    <property type="project" value="BHF-UCL"/>
</dbReference>
<dbReference type="GO" id="GO:0071354">
    <property type="term" value="P:cellular response to interleukin-6"/>
    <property type="evidence" value="ECO:0000314"/>
    <property type="project" value="BHF-UCL"/>
</dbReference>
<dbReference type="GO" id="GO:0044320">
    <property type="term" value="P:cellular response to leptin stimulus"/>
    <property type="evidence" value="ECO:0000314"/>
    <property type="project" value="BHF-UCL"/>
</dbReference>
<dbReference type="GO" id="GO:0071356">
    <property type="term" value="P:cellular response to tumor necrosis factor"/>
    <property type="evidence" value="ECO:0000314"/>
    <property type="project" value="BHF-UCL"/>
</dbReference>
<dbReference type="GO" id="GO:0007005">
    <property type="term" value="P:mitochondrion organization"/>
    <property type="evidence" value="ECO:0007669"/>
    <property type="project" value="Ensembl"/>
</dbReference>
<dbReference type="GO" id="GO:2001170">
    <property type="term" value="P:negative regulation of ATP biosynthetic process"/>
    <property type="evidence" value="ECO:0007669"/>
    <property type="project" value="Ensembl"/>
</dbReference>
<dbReference type="GO" id="GO:0046325">
    <property type="term" value="P:negative regulation of D-glucose import"/>
    <property type="evidence" value="ECO:0000315"/>
    <property type="project" value="BHF-UCL"/>
</dbReference>
<dbReference type="GO" id="GO:0046627">
    <property type="term" value="P:negative regulation of insulin receptor signaling pathway"/>
    <property type="evidence" value="ECO:0007669"/>
    <property type="project" value="Ensembl"/>
</dbReference>
<dbReference type="GO" id="GO:1903077">
    <property type="term" value="P:negative regulation of protein localization to plasma membrane"/>
    <property type="evidence" value="ECO:0007669"/>
    <property type="project" value="Ensembl"/>
</dbReference>
<dbReference type="GO" id="GO:2001171">
    <property type="term" value="P:positive regulation of ATP biosynthetic process"/>
    <property type="evidence" value="ECO:0000315"/>
    <property type="project" value="BHF-UCL"/>
</dbReference>
<dbReference type="GO" id="GO:0070346">
    <property type="term" value="P:positive regulation of fat cell proliferation"/>
    <property type="evidence" value="ECO:0007669"/>
    <property type="project" value="Ensembl"/>
</dbReference>
<dbReference type="GO" id="GO:0010628">
    <property type="term" value="P:positive regulation of gene expression"/>
    <property type="evidence" value="ECO:0007669"/>
    <property type="project" value="Ensembl"/>
</dbReference>
<dbReference type="GO" id="GO:2000379">
    <property type="term" value="P:positive regulation of reactive oxygen species metabolic process"/>
    <property type="evidence" value="ECO:0007669"/>
    <property type="project" value="Ensembl"/>
</dbReference>
<dbReference type="GO" id="GO:0045944">
    <property type="term" value="P:positive regulation of transcription by RNA polymerase II"/>
    <property type="evidence" value="ECO:0007669"/>
    <property type="project" value="Ensembl"/>
</dbReference>
<dbReference type="GO" id="GO:0051881">
    <property type="term" value="P:regulation of mitochondrial membrane potential"/>
    <property type="evidence" value="ECO:0000315"/>
    <property type="project" value="BHF-UCL"/>
</dbReference>
<dbReference type="GO" id="GO:2000377">
    <property type="term" value="P:regulation of reactive oxygen species metabolic process"/>
    <property type="evidence" value="ECO:0000315"/>
    <property type="project" value="BHF-UCL"/>
</dbReference>
<dbReference type="CDD" id="cd13167">
    <property type="entry name" value="PTB_P-CLI1"/>
    <property type="match status" value="1"/>
</dbReference>
<dbReference type="FunFam" id="2.30.29.30:FF:000156">
    <property type="entry name" value="PTB-containing, cubilin and LRP1-interacting protein"/>
    <property type="match status" value="1"/>
</dbReference>
<dbReference type="Gene3D" id="2.30.29.30">
    <property type="entry name" value="Pleckstrin-homology domain (PH domain)/Phosphotyrosine-binding domain (PTB)"/>
    <property type="match status" value="1"/>
</dbReference>
<dbReference type="InterPro" id="IPR011993">
    <property type="entry name" value="PH-like_dom_sf"/>
</dbReference>
<dbReference type="InterPro" id="IPR039112">
    <property type="entry name" value="PID1"/>
</dbReference>
<dbReference type="InterPro" id="IPR039114">
    <property type="entry name" value="PID1_PTB"/>
</dbReference>
<dbReference type="InterPro" id="IPR006020">
    <property type="entry name" value="PTB/PI_dom"/>
</dbReference>
<dbReference type="PANTHER" id="PTHR16265">
    <property type="entry name" value="PTB-CONTAINING, CUBILIN AND LRP1-INTERACTING PROTEIN"/>
    <property type="match status" value="1"/>
</dbReference>
<dbReference type="PANTHER" id="PTHR16265:SF1">
    <property type="entry name" value="PTB-CONTAINING, CUBILIN AND LRP1-INTERACTING PROTEIN"/>
    <property type="match status" value="1"/>
</dbReference>
<dbReference type="Pfam" id="PF14719">
    <property type="entry name" value="PID_2"/>
    <property type="match status" value="1"/>
</dbReference>
<dbReference type="SMART" id="SM00462">
    <property type="entry name" value="PTB"/>
    <property type="match status" value="1"/>
</dbReference>
<dbReference type="SUPFAM" id="SSF50729">
    <property type="entry name" value="PH domain-like"/>
    <property type="match status" value="1"/>
</dbReference>
<dbReference type="PROSITE" id="PS01179">
    <property type="entry name" value="PID"/>
    <property type="match status" value="1"/>
</dbReference>
<sequence length="217" mass="24784">MWQPATERLQHFQTMLKSKLNVLTLKKEPIPAVLFHEPEAIELCTTTPLMKARTHSGCKVTYLGKVSTTGMQFLSGCTEKPVIELWKKHTLAREDVFPANALLEIRPFQVWLHHLDHKGEATVHMDTFQVARIAYCTADHNVSPNIFAWVYREINDDLSYQMDCHAVQCESKLEAKKLAHAMMEAFKKTFHSMKSDGRIHRSSSSEEASQELESDDG</sequence>
<evidence type="ECO:0000250" key="1"/>
<evidence type="ECO:0000255" key="2">
    <source>
        <dbReference type="PROSITE-ProRule" id="PRU00148"/>
    </source>
</evidence>
<evidence type="ECO:0000256" key="3">
    <source>
        <dbReference type="SAM" id="MobiDB-lite"/>
    </source>
</evidence>
<evidence type="ECO:0000303" key="4">
    <source>
    </source>
</evidence>
<evidence type="ECO:0000305" key="5"/>
<evidence type="ECO:0007744" key="6">
    <source>
    </source>
</evidence>
<evidence type="ECO:0007744" key="7">
    <source>
    </source>
</evidence>
<feature type="chain" id="PRO_0000274901" description="PTB-containing, cubilin and LRP1-interacting protein">
    <location>
        <begin position="1"/>
        <end position="217"/>
    </location>
</feature>
<feature type="domain" description="PID" evidence="2">
    <location>
        <begin position="60"/>
        <end position="217"/>
    </location>
</feature>
<feature type="region of interest" description="Disordered" evidence="3">
    <location>
        <begin position="194"/>
        <end position="217"/>
    </location>
</feature>
<feature type="compositionally biased region" description="Acidic residues" evidence="3">
    <location>
        <begin position="208"/>
        <end position="217"/>
    </location>
</feature>
<feature type="modified residue" description="Phosphoserine" evidence="7">
    <location>
        <position position="202"/>
    </location>
</feature>
<feature type="modified residue" description="Phosphoserine" evidence="6 7">
    <location>
        <position position="203"/>
    </location>
</feature>
<feature type="modified residue" description="Phosphoserine" evidence="6 7">
    <location>
        <position position="214"/>
    </location>
</feature>
<feature type="splice variant" id="VSP_022913" description="In isoform 2." evidence="4">
    <original>MWQPATERLQHFQTM</original>
    <variation>M</variation>
    <location>
        <begin position="1"/>
        <end position="15"/>
    </location>
</feature>
<feature type="sequence conflict" description="In Ref. 2; AAH54112." evidence="5" ref="2">
    <original>D</original>
    <variation>G</variation>
    <location>
        <position position="216"/>
    </location>
</feature>
<name>PCLI1_MOUSE</name>
<protein>
    <recommendedName>
        <fullName>PTB-containing, cubilin and LRP1-interacting protein</fullName>
        <shortName>P-CLI1</shortName>
    </recommendedName>
    <alternativeName>
        <fullName>Phosphotyrosine interaction domain-containing protein 1</fullName>
    </alternativeName>
</protein>
<keyword id="KW-0025">Alternative splicing</keyword>
<keyword id="KW-0963">Cytoplasm</keyword>
<keyword id="KW-0597">Phosphoprotein</keyword>
<keyword id="KW-1185">Reference proteome</keyword>